<proteinExistence type="inferred from homology"/>
<organism>
    <name type="scientific">Bradyrhizobium diazoefficiens (strain JCM 10833 / BCRC 13528 / IAM 13628 / NBRC 14792 / USDA 110)</name>
    <dbReference type="NCBI Taxonomy" id="224911"/>
    <lineage>
        <taxon>Bacteria</taxon>
        <taxon>Pseudomonadati</taxon>
        <taxon>Pseudomonadota</taxon>
        <taxon>Alphaproteobacteria</taxon>
        <taxon>Hyphomicrobiales</taxon>
        <taxon>Nitrobacteraceae</taxon>
        <taxon>Bradyrhizobium</taxon>
    </lineage>
</organism>
<gene>
    <name evidence="1" type="primary">dut</name>
    <name type="ordered locus">bll0758</name>
</gene>
<dbReference type="EC" id="3.6.1.23" evidence="1"/>
<dbReference type="EMBL" id="AF042096">
    <property type="protein sequence ID" value="AAB97415.1"/>
    <property type="molecule type" value="Genomic_DNA"/>
</dbReference>
<dbReference type="EMBL" id="BA000040">
    <property type="protein sequence ID" value="BAC46023.1"/>
    <property type="molecule type" value="Genomic_DNA"/>
</dbReference>
<dbReference type="RefSeq" id="NP_767398.1">
    <property type="nucleotide sequence ID" value="NC_004463.1"/>
</dbReference>
<dbReference type="RefSeq" id="WP_011083581.1">
    <property type="nucleotide sequence ID" value="NC_004463.1"/>
</dbReference>
<dbReference type="SMR" id="O52597"/>
<dbReference type="FunCoup" id="O52597">
    <property type="interactions" value="548"/>
</dbReference>
<dbReference type="STRING" id="224911.AAV28_00640"/>
<dbReference type="EnsemblBacteria" id="BAC46023">
    <property type="protein sequence ID" value="BAC46023"/>
    <property type="gene ID" value="BAC46023"/>
</dbReference>
<dbReference type="GeneID" id="46488034"/>
<dbReference type="KEGG" id="bja:bll0758"/>
<dbReference type="PATRIC" id="fig|224911.44.peg.132"/>
<dbReference type="eggNOG" id="COG0756">
    <property type="taxonomic scope" value="Bacteria"/>
</dbReference>
<dbReference type="HOGENOM" id="CLU_068508_1_2_5"/>
<dbReference type="InParanoid" id="O52597"/>
<dbReference type="OrthoDB" id="9809956at2"/>
<dbReference type="PhylomeDB" id="O52597"/>
<dbReference type="UniPathway" id="UPA00610">
    <property type="reaction ID" value="UER00666"/>
</dbReference>
<dbReference type="Proteomes" id="UP000002526">
    <property type="component" value="Chromosome"/>
</dbReference>
<dbReference type="GO" id="GO:0004170">
    <property type="term" value="F:dUTP diphosphatase activity"/>
    <property type="evidence" value="ECO:0000318"/>
    <property type="project" value="GO_Central"/>
</dbReference>
<dbReference type="GO" id="GO:0000287">
    <property type="term" value="F:magnesium ion binding"/>
    <property type="evidence" value="ECO:0000318"/>
    <property type="project" value="GO_Central"/>
</dbReference>
<dbReference type="GO" id="GO:0006226">
    <property type="term" value="P:dUMP biosynthetic process"/>
    <property type="evidence" value="ECO:0000318"/>
    <property type="project" value="GO_Central"/>
</dbReference>
<dbReference type="GO" id="GO:0046081">
    <property type="term" value="P:dUTP catabolic process"/>
    <property type="evidence" value="ECO:0000318"/>
    <property type="project" value="GO_Central"/>
</dbReference>
<dbReference type="CDD" id="cd07557">
    <property type="entry name" value="trimeric_dUTPase"/>
    <property type="match status" value="1"/>
</dbReference>
<dbReference type="FunFam" id="2.70.40.10:FF:000002">
    <property type="entry name" value="dUTP diphosphatase"/>
    <property type="match status" value="1"/>
</dbReference>
<dbReference type="Gene3D" id="2.70.40.10">
    <property type="match status" value="1"/>
</dbReference>
<dbReference type="HAMAP" id="MF_00116">
    <property type="entry name" value="dUTPase_bact"/>
    <property type="match status" value="1"/>
</dbReference>
<dbReference type="InterPro" id="IPR008181">
    <property type="entry name" value="dUTPase"/>
</dbReference>
<dbReference type="InterPro" id="IPR029054">
    <property type="entry name" value="dUTPase-like"/>
</dbReference>
<dbReference type="InterPro" id="IPR036157">
    <property type="entry name" value="dUTPase-like_sf"/>
</dbReference>
<dbReference type="InterPro" id="IPR033704">
    <property type="entry name" value="dUTPase_trimeric"/>
</dbReference>
<dbReference type="NCBIfam" id="TIGR00576">
    <property type="entry name" value="dut"/>
    <property type="match status" value="1"/>
</dbReference>
<dbReference type="NCBIfam" id="NF001862">
    <property type="entry name" value="PRK00601.1"/>
    <property type="match status" value="1"/>
</dbReference>
<dbReference type="PANTHER" id="PTHR11241">
    <property type="entry name" value="DEOXYURIDINE 5'-TRIPHOSPHATE NUCLEOTIDOHYDROLASE"/>
    <property type="match status" value="1"/>
</dbReference>
<dbReference type="PANTHER" id="PTHR11241:SF0">
    <property type="entry name" value="DEOXYURIDINE 5'-TRIPHOSPHATE NUCLEOTIDOHYDROLASE"/>
    <property type="match status" value="1"/>
</dbReference>
<dbReference type="Pfam" id="PF00692">
    <property type="entry name" value="dUTPase"/>
    <property type="match status" value="1"/>
</dbReference>
<dbReference type="SUPFAM" id="SSF51283">
    <property type="entry name" value="dUTPase-like"/>
    <property type="match status" value="1"/>
</dbReference>
<name>DUT_BRADU</name>
<feature type="chain" id="PRO_0000182834" description="Deoxyuridine 5'-triphosphate nucleotidohydrolase">
    <location>
        <begin position="1"/>
        <end position="152"/>
    </location>
</feature>
<feature type="binding site" evidence="1">
    <location>
        <begin position="72"/>
        <end position="74"/>
    </location>
    <ligand>
        <name>substrate</name>
    </ligand>
</feature>
<feature type="binding site" evidence="1">
    <location>
        <position position="85"/>
    </location>
    <ligand>
        <name>substrate</name>
    </ligand>
</feature>
<feature type="binding site" evidence="1">
    <location>
        <begin position="89"/>
        <end position="91"/>
    </location>
    <ligand>
        <name>substrate</name>
    </ligand>
</feature>
<feature type="binding site" evidence="1">
    <location>
        <position position="99"/>
    </location>
    <ligand>
        <name>substrate</name>
    </ligand>
</feature>
<feature type="sequence conflict" description="In Ref. 1; AAB97415." evidence="2" ref="1">
    <original>A</original>
    <variation>V</variation>
    <location>
        <position position="60"/>
    </location>
</feature>
<feature type="sequence conflict" description="In Ref. 1." evidence="2" ref="1">
    <original>AFVIKRGERIAQ</original>
    <variation>VLRDQARRADRAK</variation>
    <location>
        <begin position="109"/>
        <end position="120"/>
    </location>
</feature>
<reference key="1">
    <citation type="submission" date="1998-01" db="EMBL/GenBank/DDBJ databases">
        <title>BdfA, a novel sensor protein of Bradyrhizobium japonicum, is required for normal bacteroid differentiation in soybean (Glycine max).</title>
        <authorList>
            <person name="Mueller P."/>
            <person name="Unnewehr A."/>
        </authorList>
    </citation>
    <scope>NUCLEOTIDE SEQUENCE [GENOMIC DNA]</scope>
    <source>
        <strain>USDA 110spc4</strain>
    </source>
</reference>
<reference key="2">
    <citation type="journal article" date="2002" name="DNA Res.">
        <title>Complete genomic sequence of nitrogen-fixing symbiotic bacterium Bradyrhizobium japonicum USDA110.</title>
        <authorList>
            <person name="Kaneko T."/>
            <person name="Nakamura Y."/>
            <person name="Sato S."/>
            <person name="Minamisawa K."/>
            <person name="Uchiumi T."/>
            <person name="Sasamoto S."/>
            <person name="Watanabe A."/>
            <person name="Idesawa K."/>
            <person name="Iriguchi M."/>
            <person name="Kawashima K."/>
            <person name="Kohara M."/>
            <person name="Matsumoto M."/>
            <person name="Shimpo S."/>
            <person name="Tsuruoka H."/>
            <person name="Wada T."/>
            <person name="Yamada M."/>
            <person name="Tabata S."/>
        </authorList>
    </citation>
    <scope>NUCLEOTIDE SEQUENCE [LARGE SCALE GENOMIC DNA]</scope>
    <source>
        <strain>JCM 10833 / BCRC 13528 / IAM 13628 / NBRC 14792 / USDA 110</strain>
    </source>
</reference>
<protein>
    <recommendedName>
        <fullName evidence="1">Deoxyuridine 5'-triphosphate nucleotidohydrolase</fullName>
        <shortName evidence="1">dUTPase</shortName>
        <ecNumber evidence="1">3.6.1.23</ecNumber>
    </recommendedName>
    <alternativeName>
        <fullName evidence="1">dUTP pyrophosphatase</fullName>
    </alternativeName>
</protein>
<accession>O52597</accession>
<sequence length="152" mass="15574">MSTKVTVELQRLPHAEGLPLPAYQTAEAAGLDLMAAVPEDAPLTLASGRYALVPTGLAIALPPGHEAQVRPRSGLAAKHGVTVLNSPGTIDADYRGEIKVILINHGAAAFVIKRGERIAQMVIAPVVQAALVPVATLSATDRGAGGFGSTGR</sequence>
<evidence type="ECO:0000255" key="1">
    <source>
        <dbReference type="HAMAP-Rule" id="MF_00116"/>
    </source>
</evidence>
<evidence type="ECO:0000305" key="2"/>
<comment type="function">
    <text evidence="1">This enzyme is involved in nucleotide metabolism: it produces dUMP, the immediate precursor of thymidine nucleotides and it decreases the intracellular concentration of dUTP so that uracil cannot be incorporated into DNA.</text>
</comment>
<comment type="catalytic activity">
    <reaction evidence="1">
        <text>dUTP + H2O = dUMP + diphosphate + H(+)</text>
        <dbReference type="Rhea" id="RHEA:10248"/>
        <dbReference type="ChEBI" id="CHEBI:15377"/>
        <dbReference type="ChEBI" id="CHEBI:15378"/>
        <dbReference type="ChEBI" id="CHEBI:33019"/>
        <dbReference type="ChEBI" id="CHEBI:61555"/>
        <dbReference type="ChEBI" id="CHEBI:246422"/>
        <dbReference type="EC" id="3.6.1.23"/>
    </reaction>
</comment>
<comment type="cofactor">
    <cofactor evidence="1">
        <name>Mg(2+)</name>
        <dbReference type="ChEBI" id="CHEBI:18420"/>
    </cofactor>
</comment>
<comment type="pathway">
    <text evidence="1">Pyrimidine metabolism; dUMP biosynthesis; dUMP from dCTP (dUTP route): step 2/2.</text>
</comment>
<comment type="similarity">
    <text evidence="1">Belongs to the dUTPase family.</text>
</comment>
<keyword id="KW-0378">Hydrolase</keyword>
<keyword id="KW-0460">Magnesium</keyword>
<keyword id="KW-0479">Metal-binding</keyword>
<keyword id="KW-0546">Nucleotide metabolism</keyword>
<keyword id="KW-1185">Reference proteome</keyword>